<dbReference type="EC" id="2.1.2.9" evidence="1"/>
<dbReference type="EMBL" id="CP000850">
    <property type="protein sequence ID" value="ABV97747.1"/>
    <property type="molecule type" value="Genomic_DNA"/>
</dbReference>
<dbReference type="SMR" id="A8LY30"/>
<dbReference type="STRING" id="391037.Sare_1862"/>
<dbReference type="KEGG" id="saq:Sare_1862"/>
<dbReference type="PATRIC" id="fig|391037.6.peg.1890"/>
<dbReference type="eggNOG" id="COG0223">
    <property type="taxonomic scope" value="Bacteria"/>
</dbReference>
<dbReference type="HOGENOM" id="CLU_033347_1_0_11"/>
<dbReference type="OrthoDB" id="9802815at2"/>
<dbReference type="GO" id="GO:0005829">
    <property type="term" value="C:cytosol"/>
    <property type="evidence" value="ECO:0007669"/>
    <property type="project" value="TreeGrafter"/>
</dbReference>
<dbReference type="GO" id="GO:0004479">
    <property type="term" value="F:methionyl-tRNA formyltransferase activity"/>
    <property type="evidence" value="ECO:0007669"/>
    <property type="project" value="UniProtKB-UniRule"/>
</dbReference>
<dbReference type="CDD" id="cd08646">
    <property type="entry name" value="FMT_core_Met-tRNA-FMT_N"/>
    <property type="match status" value="1"/>
</dbReference>
<dbReference type="CDD" id="cd08704">
    <property type="entry name" value="Met_tRNA_FMT_C"/>
    <property type="match status" value="1"/>
</dbReference>
<dbReference type="FunFam" id="3.40.50.12230:FF:000001">
    <property type="entry name" value="Methionyl-tRNA formyltransferase"/>
    <property type="match status" value="1"/>
</dbReference>
<dbReference type="Gene3D" id="3.40.50.12230">
    <property type="match status" value="1"/>
</dbReference>
<dbReference type="HAMAP" id="MF_00182">
    <property type="entry name" value="Formyl_trans"/>
    <property type="match status" value="1"/>
</dbReference>
<dbReference type="InterPro" id="IPR005794">
    <property type="entry name" value="Fmt"/>
</dbReference>
<dbReference type="InterPro" id="IPR005793">
    <property type="entry name" value="Formyl_trans_C"/>
</dbReference>
<dbReference type="InterPro" id="IPR002376">
    <property type="entry name" value="Formyl_transf_N"/>
</dbReference>
<dbReference type="InterPro" id="IPR036477">
    <property type="entry name" value="Formyl_transf_N_sf"/>
</dbReference>
<dbReference type="InterPro" id="IPR011034">
    <property type="entry name" value="Formyl_transferase-like_C_sf"/>
</dbReference>
<dbReference type="InterPro" id="IPR044135">
    <property type="entry name" value="Met-tRNA-FMT_C"/>
</dbReference>
<dbReference type="InterPro" id="IPR041711">
    <property type="entry name" value="Met-tRNA-FMT_N"/>
</dbReference>
<dbReference type="NCBIfam" id="TIGR00460">
    <property type="entry name" value="fmt"/>
    <property type="match status" value="1"/>
</dbReference>
<dbReference type="PANTHER" id="PTHR11138">
    <property type="entry name" value="METHIONYL-TRNA FORMYLTRANSFERASE"/>
    <property type="match status" value="1"/>
</dbReference>
<dbReference type="PANTHER" id="PTHR11138:SF5">
    <property type="entry name" value="METHIONYL-TRNA FORMYLTRANSFERASE, MITOCHONDRIAL"/>
    <property type="match status" value="1"/>
</dbReference>
<dbReference type="Pfam" id="PF02911">
    <property type="entry name" value="Formyl_trans_C"/>
    <property type="match status" value="1"/>
</dbReference>
<dbReference type="Pfam" id="PF00551">
    <property type="entry name" value="Formyl_trans_N"/>
    <property type="match status" value="1"/>
</dbReference>
<dbReference type="SUPFAM" id="SSF50486">
    <property type="entry name" value="FMT C-terminal domain-like"/>
    <property type="match status" value="1"/>
</dbReference>
<dbReference type="SUPFAM" id="SSF53328">
    <property type="entry name" value="Formyltransferase"/>
    <property type="match status" value="1"/>
</dbReference>
<protein>
    <recommendedName>
        <fullName evidence="1">Methionyl-tRNA formyltransferase</fullName>
        <ecNumber evidence="1">2.1.2.9</ecNumber>
    </recommendedName>
</protein>
<gene>
    <name evidence="1" type="primary">fmt</name>
    <name type="ordered locus">Sare_1862</name>
</gene>
<sequence length="308" mass="32315">MRVIFAGTPAVAIPALAAVADSRHELLAVVTRPDAPAGRGRGLSRSPVAAWADEQGVEVLTPARPREPEFLDRLRALAPDCVPVVAYGALVPPVALEIPQHGWVNLHFSLLPAWRGAAPVQHAVLHGDELTGASVFQLEQGLDTGPVYGTLTDEVGPADTSGDLLERLAHSGAGLLTAVLDAIEDGTARAEPQPVDGVSLAPKLTVADARVRWGDPAFAVDRRVRACTPAPGPWTTFRDERVKLGPVTPVADGPELKPGELLVERSRVLAGTATTPVRLGEVRAAGKRAMPASDWARGVRVTVGEVLA</sequence>
<comment type="function">
    <text evidence="1">Attaches a formyl group to the free amino group of methionyl-tRNA(fMet). The formyl group appears to play a dual role in the initiator identity of N-formylmethionyl-tRNA by promoting its recognition by IF2 and preventing the misappropriation of this tRNA by the elongation apparatus.</text>
</comment>
<comment type="catalytic activity">
    <reaction evidence="1">
        <text>L-methionyl-tRNA(fMet) + (6R)-10-formyltetrahydrofolate = N-formyl-L-methionyl-tRNA(fMet) + (6S)-5,6,7,8-tetrahydrofolate + H(+)</text>
        <dbReference type="Rhea" id="RHEA:24380"/>
        <dbReference type="Rhea" id="RHEA-COMP:9952"/>
        <dbReference type="Rhea" id="RHEA-COMP:9953"/>
        <dbReference type="ChEBI" id="CHEBI:15378"/>
        <dbReference type="ChEBI" id="CHEBI:57453"/>
        <dbReference type="ChEBI" id="CHEBI:78530"/>
        <dbReference type="ChEBI" id="CHEBI:78844"/>
        <dbReference type="ChEBI" id="CHEBI:195366"/>
        <dbReference type="EC" id="2.1.2.9"/>
    </reaction>
</comment>
<comment type="similarity">
    <text evidence="1">Belongs to the Fmt family.</text>
</comment>
<feature type="chain" id="PRO_1000077316" description="Methionyl-tRNA formyltransferase">
    <location>
        <begin position="1"/>
        <end position="308"/>
    </location>
</feature>
<feature type="binding site" evidence="1">
    <location>
        <begin position="109"/>
        <end position="112"/>
    </location>
    <ligand>
        <name>(6S)-5,6,7,8-tetrahydrofolate</name>
        <dbReference type="ChEBI" id="CHEBI:57453"/>
    </ligand>
</feature>
<reference key="1">
    <citation type="submission" date="2007-10" db="EMBL/GenBank/DDBJ databases">
        <title>Complete sequence of Salinispora arenicola CNS-205.</title>
        <authorList>
            <consortium name="US DOE Joint Genome Institute"/>
            <person name="Copeland A."/>
            <person name="Lucas S."/>
            <person name="Lapidus A."/>
            <person name="Barry K."/>
            <person name="Glavina del Rio T."/>
            <person name="Dalin E."/>
            <person name="Tice H."/>
            <person name="Pitluck S."/>
            <person name="Foster B."/>
            <person name="Schmutz J."/>
            <person name="Larimer F."/>
            <person name="Land M."/>
            <person name="Hauser L."/>
            <person name="Kyrpides N."/>
            <person name="Ivanova N."/>
            <person name="Jensen P.R."/>
            <person name="Moore B.S."/>
            <person name="Penn K."/>
            <person name="Jenkins C."/>
            <person name="Udwary D."/>
            <person name="Xiang L."/>
            <person name="Gontang E."/>
            <person name="Richardson P."/>
        </authorList>
    </citation>
    <scope>NUCLEOTIDE SEQUENCE [LARGE SCALE GENOMIC DNA]</scope>
    <source>
        <strain>CNS-205</strain>
    </source>
</reference>
<proteinExistence type="inferred from homology"/>
<organism>
    <name type="scientific">Salinispora arenicola (strain CNS-205)</name>
    <dbReference type="NCBI Taxonomy" id="391037"/>
    <lineage>
        <taxon>Bacteria</taxon>
        <taxon>Bacillati</taxon>
        <taxon>Actinomycetota</taxon>
        <taxon>Actinomycetes</taxon>
        <taxon>Micromonosporales</taxon>
        <taxon>Micromonosporaceae</taxon>
        <taxon>Salinispora</taxon>
    </lineage>
</organism>
<name>FMT_SALAI</name>
<accession>A8LY30</accession>
<keyword id="KW-0648">Protein biosynthesis</keyword>
<keyword id="KW-0808">Transferase</keyword>
<evidence type="ECO:0000255" key="1">
    <source>
        <dbReference type="HAMAP-Rule" id="MF_00182"/>
    </source>
</evidence>